<proteinExistence type="inferred from homology"/>
<name>TATB_BURP0</name>
<organism>
    <name type="scientific">Burkholderia pseudomallei (strain 1106a)</name>
    <dbReference type="NCBI Taxonomy" id="357348"/>
    <lineage>
        <taxon>Bacteria</taxon>
        <taxon>Pseudomonadati</taxon>
        <taxon>Pseudomonadota</taxon>
        <taxon>Betaproteobacteria</taxon>
        <taxon>Burkholderiales</taxon>
        <taxon>Burkholderiaceae</taxon>
        <taxon>Burkholderia</taxon>
        <taxon>pseudomallei group</taxon>
    </lineage>
</organism>
<comment type="function">
    <text evidence="1">Part of the twin-arginine translocation (Tat) system that transports large folded proteins containing a characteristic twin-arginine motif in their signal peptide across membranes. Together with TatC, TatB is part of a receptor directly interacting with Tat signal peptides. TatB may form an oligomeric binding site that transiently accommodates folded Tat precursor proteins before their translocation.</text>
</comment>
<comment type="subunit">
    <text evidence="1">The Tat system comprises two distinct complexes: a TatABC complex, containing multiple copies of TatA, TatB and TatC subunits, and a separate TatA complex, containing only TatA subunits. Substrates initially bind to the TatABC complex, which probably triggers association of the separate TatA complex to form the active translocon.</text>
</comment>
<comment type="subcellular location">
    <subcellularLocation>
        <location evidence="1">Cell inner membrane</location>
        <topology evidence="1">Single-pass membrane protein</topology>
    </subcellularLocation>
</comment>
<comment type="similarity">
    <text evidence="1">Belongs to the TatB family.</text>
</comment>
<protein>
    <recommendedName>
        <fullName evidence="1">Sec-independent protein translocase protein TatB</fullName>
    </recommendedName>
</protein>
<evidence type="ECO:0000255" key="1">
    <source>
        <dbReference type="HAMAP-Rule" id="MF_00237"/>
    </source>
</evidence>
<evidence type="ECO:0000256" key="2">
    <source>
        <dbReference type="SAM" id="MobiDB-lite"/>
    </source>
</evidence>
<dbReference type="EMBL" id="CP000572">
    <property type="protein sequence ID" value="ABN91502.1"/>
    <property type="molecule type" value="Genomic_DNA"/>
</dbReference>
<dbReference type="RefSeq" id="WP_004531855.1">
    <property type="nucleotide sequence ID" value="NC_009076.1"/>
</dbReference>
<dbReference type="SMR" id="A3P021"/>
<dbReference type="GeneID" id="93061744"/>
<dbReference type="KEGG" id="bpl:BURPS1106A_3712"/>
<dbReference type="HOGENOM" id="CLU_086034_1_1_4"/>
<dbReference type="Proteomes" id="UP000006738">
    <property type="component" value="Chromosome I"/>
</dbReference>
<dbReference type="GO" id="GO:0033281">
    <property type="term" value="C:TAT protein transport complex"/>
    <property type="evidence" value="ECO:0007669"/>
    <property type="project" value="UniProtKB-UniRule"/>
</dbReference>
<dbReference type="GO" id="GO:0008320">
    <property type="term" value="F:protein transmembrane transporter activity"/>
    <property type="evidence" value="ECO:0007669"/>
    <property type="project" value="UniProtKB-UniRule"/>
</dbReference>
<dbReference type="GO" id="GO:0043953">
    <property type="term" value="P:protein transport by the Tat complex"/>
    <property type="evidence" value="ECO:0007669"/>
    <property type="project" value="UniProtKB-UniRule"/>
</dbReference>
<dbReference type="Gene3D" id="1.20.5.3310">
    <property type="match status" value="1"/>
</dbReference>
<dbReference type="HAMAP" id="MF_00237">
    <property type="entry name" value="TatB"/>
    <property type="match status" value="1"/>
</dbReference>
<dbReference type="InterPro" id="IPR003369">
    <property type="entry name" value="TatA/B/E"/>
</dbReference>
<dbReference type="InterPro" id="IPR018448">
    <property type="entry name" value="TatB"/>
</dbReference>
<dbReference type="NCBIfam" id="TIGR01410">
    <property type="entry name" value="tatB"/>
    <property type="match status" value="1"/>
</dbReference>
<dbReference type="PANTHER" id="PTHR33162">
    <property type="entry name" value="SEC-INDEPENDENT PROTEIN TRANSLOCASE PROTEIN TATA, CHLOROPLASTIC"/>
    <property type="match status" value="1"/>
</dbReference>
<dbReference type="PANTHER" id="PTHR33162:SF1">
    <property type="entry name" value="SEC-INDEPENDENT PROTEIN TRANSLOCASE PROTEIN TATA, CHLOROPLASTIC"/>
    <property type="match status" value="1"/>
</dbReference>
<dbReference type="Pfam" id="PF02416">
    <property type="entry name" value="TatA_B_E"/>
    <property type="match status" value="1"/>
</dbReference>
<dbReference type="PRINTS" id="PR01506">
    <property type="entry name" value="TATBPROTEIN"/>
</dbReference>
<reference key="1">
    <citation type="journal article" date="2010" name="Genome Biol. Evol.">
        <title>Continuing evolution of Burkholderia mallei through genome reduction and large-scale rearrangements.</title>
        <authorList>
            <person name="Losada L."/>
            <person name="Ronning C.M."/>
            <person name="DeShazer D."/>
            <person name="Woods D."/>
            <person name="Fedorova N."/>
            <person name="Kim H.S."/>
            <person name="Shabalina S.A."/>
            <person name="Pearson T.R."/>
            <person name="Brinkac L."/>
            <person name="Tan P."/>
            <person name="Nandi T."/>
            <person name="Crabtree J."/>
            <person name="Badger J."/>
            <person name="Beckstrom-Sternberg S."/>
            <person name="Saqib M."/>
            <person name="Schutzer S.E."/>
            <person name="Keim P."/>
            <person name="Nierman W.C."/>
        </authorList>
    </citation>
    <scope>NUCLEOTIDE SEQUENCE [LARGE SCALE GENOMIC DNA]</scope>
    <source>
        <strain>1106a</strain>
    </source>
</reference>
<feature type="chain" id="PRO_0000301154" description="Sec-independent protein translocase protein TatB">
    <location>
        <begin position="1"/>
        <end position="175"/>
    </location>
</feature>
<feature type="transmembrane region" description="Helical" evidence="1">
    <location>
        <begin position="1"/>
        <end position="21"/>
    </location>
</feature>
<feature type="region of interest" description="Disordered" evidence="2">
    <location>
        <begin position="94"/>
        <end position="118"/>
    </location>
</feature>
<feature type="region of interest" description="Disordered" evidence="2">
    <location>
        <begin position="153"/>
        <end position="175"/>
    </location>
</feature>
<feature type="compositionally biased region" description="Low complexity" evidence="2">
    <location>
        <begin position="94"/>
        <end position="115"/>
    </location>
</feature>
<feature type="compositionally biased region" description="Basic residues" evidence="2">
    <location>
        <begin position="160"/>
        <end position="175"/>
    </location>
</feature>
<keyword id="KW-0997">Cell inner membrane</keyword>
<keyword id="KW-1003">Cell membrane</keyword>
<keyword id="KW-0472">Membrane</keyword>
<keyword id="KW-0653">Protein transport</keyword>
<keyword id="KW-0811">Translocation</keyword>
<keyword id="KW-0812">Transmembrane</keyword>
<keyword id="KW-1133">Transmembrane helix</keyword>
<keyword id="KW-0813">Transport</keyword>
<accession>A3P021</accession>
<gene>
    <name evidence="1" type="primary">tatB</name>
    <name type="ordered locus">BURPS1106A_3712</name>
</gene>
<sequence>MLDLGLSKMALIGVVALVVLGPERLPRVARTAGALFGRAQRYINDVKAEVSREIELDALRTMKTDFEQAARNVENTIHDNLREHERDLNAAWNSAVSPGGSAAADAPDGPSAASGEPSWRTIAAAPAKRRNWRVKKAVTPVWYKRATMRRTQVQSGAARVARHRPASLRRPARFL</sequence>